<organism>
    <name type="scientific">Dichelobacter nodosus</name>
    <name type="common">Bacteroides nodosus</name>
    <dbReference type="NCBI Taxonomy" id="870"/>
    <lineage>
        <taxon>Bacteria</taxon>
        <taxon>Pseudomonadati</taxon>
        <taxon>Pseudomonadota</taxon>
        <taxon>Gammaproteobacteria</taxon>
        <taxon>Cardiobacteriales</taxon>
        <taxon>Cardiobacteriaceae</taxon>
        <taxon>Dichelobacter</taxon>
    </lineage>
</organism>
<reference key="1">
    <citation type="journal article" date="1991" name="Mol. Microbiol.">
        <title>Organization of the fimbrial gene region of Bacteroides nodosus: class I and class II strains.</title>
        <authorList>
            <person name="Hobbs M."/>
            <person name="Dalrymple B.P."/>
            <person name="Cox P.T."/>
            <person name="Livingstone S.P."/>
            <person name="Delaney S.F."/>
            <person name="Mattick J.S."/>
        </authorList>
    </citation>
    <scope>NUCLEOTIDE SEQUENCE [GENOMIC DNA]</scope>
    <source>
        <strain>Serogroup D isolate VCS1172</strain>
    </source>
</reference>
<sequence>MKKMHGFTLIELMIVVAIIGVLASIALMQYQNFVVRSQVTRVLMEAGELRLAVEQCLNDGTTTVGNGANECDPRASGSNIISGASQNPEIVIAANTGVVQFPNPLTEETALTATFNNSAASIIHGKKLIWQRQKSGSWYCHSNAAEKFLPSGCKYDASL</sequence>
<keyword id="KW-1015">Disulfide bond</keyword>
<keyword id="KW-0281">Fimbrium</keyword>
<keyword id="KW-0472">Membrane</keyword>
<keyword id="KW-0488">Methylation</keyword>
<keyword id="KW-0812">Transmembrane</keyword>
<keyword id="KW-1133">Transmembrane helix</keyword>
<feature type="propeptide" id="PRO_0000024144" description="Leader sequence" evidence="3">
    <location>
        <begin position="1"/>
        <end position="6"/>
    </location>
</feature>
<feature type="chain" id="PRO_0000024145" description="Probable minor fimbrial protein">
    <location>
        <begin position="7"/>
        <end position="159"/>
    </location>
</feature>
<feature type="transmembrane region" description="Helical" evidence="2">
    <location>
        <begin position="7"/>
        <end position="29"/>
    </location>
</feature>
<feature type="modified residue" description="N-methylphenylalanine" evidence="3">
    <location>
        <position position="7"/>
    </location>
</feature>
<feature type="disulfide bond" evidence="1">
    <location>
        <begin position="56"/>
        <end position="71"/>
    </location>
</feature>
<feature type="disulfide bond" evidence="1">
    <location>
        <begin position="140"/>
        <end position="153"/>
    </location>
</feature>
<proteinExistence type="inferred from homology"/>
<name>FMZD_DICNO</name>
<comment type="subunit">
    <text>The pili are polar flexible filaments of about 5.4 nanometers diameter and 2.5 micrometers average length; they consist of only a single polypeptide chain arranged in a helical configuration of five subunits per turn in the assembled pilus.</text>
</comment>
<comment type="subcellular location">
    <subcellularLocation>
        <location>Fimbrium</location>
    </subcellularLocation>
    <subcellularLocation>
        <location evidence="2">Membrane</location>
        <topology evidence="2">Single-pass membrane protein</topology>
    </subcellularLocation>
</comment>
<comment type="similarity">
    <text evidence="4">Belongs to the N-Me-Phe pilin family.</text>
</comment>
<evidence type="ECO:0000250" key="1"/>
<evidence type="ECO:0000255" key="2"/>
<evidence type="ECO:0000255" key="3">
    <source>
        <dbReference type="PROSITE-ProRule" id="PRU01070"/>
    </source>
</evidence>
<evidence type="ECO:0000305" key="4"/>
<protein>
    <recommendedName>
        <fullName>Probable minor fimbrial protein</fullName>
        <shortName>Pilin</shortName>
    </recommendedName>
    <alternativeName>
        <fullName>Serogroup D</fullName>
    </alternativeName>
</protein>
<dbReference type="EMBL" id="X52389">
    <property type="status" value="NOT_ANNOTATED_CDS"/>
    <property type="molecule type" value="Genomic_DNA"/>
</dbReference>
<dbReference type="PIR" id="S15249">
    <property type="entry name" value="YQBZDZ"/>
</dbReference>
<dbReference type="SMR" id="P17416"/>
<dbReference type="GO" id="GO:0016020">
    <property type="term" value="C:membrane"/>
    <property type="evidence" value="ECO:0007669"/>
    <property type="project" value="UniProtKB-SubCell"/>
</dbReference>
<dbReference type="GO" id="GO:0044096">
    <property type="term" value="C:type IV pilus"/>
    <property type="evidence" value="ECO:0007669"/>
    <property type="project" value="TreeGrafter"/>
</dbReference>
<dbReference type="GO" id="GO:0007155">
    <property type="term" value="P:cell adhesion"/>
    <property type="evidence" value="ECO:0007669"/>
    <property type="project" value="InterPro"/>
</dbReference>
<dbReference type="GO" id="GO:0043107">
    <property type="term" value="P:type IV pilus-dependent motility"/>
    <property type="evidence" value="ECO:0007669"/>
    <property type="project" value="TreeGrafter"/>
</dbReference>
<dbReference type="Gene3D" id="3.30.700.10">
    <property type="entry name" value="Glycoprotein, Type 4 Pilin"/>
    <property type="match status" value="1"/>
</dbReference>
<dbReference type="InterPro" id="IPR012902">
    <property type="entry name" value="N_methyl_site"/>
</dbReference>
<dbReference type="InterPro" id="IPR001082">
    <property type="entry name" value="Pilin"/>
</dbReference>
<dbReference type="InterPro" id="IPR045584">
    <property type="entry name" value="Pilin-like"/>
</dbReference>
<dbReference type="InterPro" id="IPR050470">
    <property type="entry name" value="T4P/T2SS_Core"/>
</dbReference>
<dbReference type="NCBIfam" id="TIGR02532">
    <property type="entry name" value="IV_pilin_GFxxxE"/>
    <property type="match status" value="1"/>
</dbReference>
<dbReference type="PANTHER" id="PTHR30093">
    <property type="entry name" value="GENERAL SECRETION PATHWAY PROTEIN G"/>
    <property type="match status" value="1"/>
</dbReference>
<dbReference type="PANTHER" id="PTHR30093:SF34">
    <property type="entry name" value="PREPILIN PEPTIDASE-DEPENDENT PROTEIN D"/>
    <property type="match status" value="1"/>
</dbReference>
<dbReference type="Pfam" id="PF07963">
    <property type="entry name" value="N_methyl"/>
    <property type="match status" value="1"/>
</dbReference>
<dbReference type="Pfam" id="PF00114">
    <property type="entry name" value="Pilin"/>
    <property type="match status" value="1"/>
</dbReference>
<dbReference type="SUPFAM" id="SSF54523">
    <property type="entry name" value="Pili subunits"/>
    <property type="match status" value="1"/>
</dbReference>
<dbReference type="PROSITE" id="PS00409">
    <property type="entry name" value="PROKAR_NTER_METHYL"/>
    <property type="match status" value="1"/>
</dbReference>
<accession>P17416</accession>
<gene>
    <name type="primary">fimZ</name>
</gene>